<reference key="1">
    <citation type="submission" date="2003-11" db="EMBL/GenBank/DDBJ databases">
        <authorList>
            <consortium name="NIH - Xenopus Gene Collection (XGC) project"/>
        </authorList>
    </citation>
    <scope>NUCLEOTIDE SEQUENCE [LARGE SCALE MRNA]</scope>
    <source>
        <tissue>Embryo</tissue>
    </source>
</reference>
<evidence type="ECO:0000250" key="1">
    <source>
        <dbReference type="UniProtKB" id="A4Z6H1"/>
    </source>
</evidence>
<evidence type="ECO:0000250" key="2">
    <source>
        <dbReference type="UniProtKB" id="P46664"/>
    </source>
</evidence>
<evidence type="ECO:0000255" key="3">
    <source>
        <dbReference type="HAMAP-Rule" id="MF_03127"/>
    </source>
</evidence>
<accession>Q6P875</accession>
<dbReference type="EC" id="6.3.4.4" evidence="3"/>
<dbReference type="EMBL" id="BC061354">
    <property type="protein sequence ID" value="AAH61354.1"/>
    <property type="molecule type" value="mRNA"/>
</dbReference>
<dbReference type="RefSeq" id="NP_989047.1">
    <property type="nucleotide sequence ID" value="NM_203716.1"/>
</dbReference>
<dbReference type="SMR" id="Q6P875"/>
<dbReference type="FunCoup" id="Q6P875">
    <property type="interactions" value="2640"/>
</dbReference>
<dbReference type="STRING" id="8364.ENSXETP00000049199"/>
<dbReference type="PaxDb" id="8364-ENSXETP00000060819"/>
<dbReference type="DNASU" id="394644"/>
<dbReference type="GeneID" id="394644"/>
<dbReference type="KEGG" id="xtr:394644"/>
<dbReference type="AGR" id="Xenbase:XB-GENE-944123"/>
<dbReference type="CTD" id="159"/>
<dbReference type="Xenbase" id="XB-GENE-944123">
    <property type="gene designation" value="adss2"/>
</dbReference>
<dbReference type="eggNOG" id="KOG1355">
    <property type="taxonomic scope" value="Eukaryota"/>
</dbReference>
<dbReference type="InParanoid" id="Q6P875"/>
<dbReference type="OrthoDB" id="10265645at2759"/>
<dbReference type="Reactome" id="R-XTR-73817">
    <property type="pathway name" value="Purine ribonucleoside monophosphate biosynthesis"/>
</dbReference>
<dbReference type="UniPathway" id="UPA00075">
    <property type="reaction ID" value="UER00335"/>
</dbReference>
<dbReference type="Proteomes" id="UP000008143">
    <property type="component" value="Chromosome 5"/>
</dbReference>
<dbReference type="Bgee" id="ENSXETG00000014538">
    <property type="expression patterns" value="Expressed in egg cell and 16 other cell types or tissues"/>
</dbReference>
<dbReference type="GO" id="GO:0005739">
    <property type="term" value="C:mitochondrion"/>
    <property type="evidence" value="ECO:0000250"/>
    <property type="project" value="UniProtKB"/>
</dbReference>
<dbReference type="GO" id="GO:0004019">
    <property type="term" value="F:adenylosuccinate synthase activity"/>
    <property type="evidence" value="ECO:0007669"/>
    <property type="project" value="UniProtKB-UniRule"/>
</dbReference>
<dbReference type="GO" id="GO:0005525">
    <property type="term" value="F:GTP binding"/>
    <property type="evidence" value="ECO:0007669"/>
    <property type="project" value="UniProtKB-UniRule"/>
</dbReference>
<dbReference type="GO" id="GO:0000287">
    <property type="term" value="F:magnesium ion binding"/>
    <property type="evidence" value="ECO:0007669"/>
    <property type="project" value="UniProtKB-UniRule"/>
</dbReference>
<dbReference type="GO" id="GO:0044208">
    <property type="term" value="P:'de novo' AMP biosynthetic process"/>
    <property type="evidence" value="ECO:0007669"/>
    <property type="project" value="UniProtKB-UniRule"/>
</dbReference>
<dbReference type="CDD" id="cd03108">
    <property type="entry name" value="AdSS"/>
    <property type="match status" value="1"/>
</dbReference>
<dbReference type="FunFam" id="3.90.170.10:FF:000001">
    <property type="entry name" value="Adenylosuccinate synthetase"/>
    <property type="match status" value="1"/>
</dbReference>
<dbReference type="FunFam" id="1.10.300.10:FF:000002">
    <property type="entry name" value="Adenylosuccinate synthetase, chloroplastic"/>
    <property type="match status" value="1"/>
</dbReference>
<dbReference type="Gene3D" id="3.40.440.10">
    <property type="entry name" value="Adenylosuccinate Synthetase, subunit A, domain 1"/>
    <property type="match status" value="1"/>
</dbReference>
<dbReference type="Gene3D" id="1.10.300.10">
    <property type="entry name" value="Adenylosuccinate Synthetase, subunit A, domain 2"/>
    <property type="match status" value="1"/>
</dbReference>
<dbReference type="Gene3D" id="3.90.170.10">
    <property type="entry name" value="Adenylosuccinate Synthetase, subunit A, domain 3"/>
    <property type="match status" value="1"/>
</dbReference>
<dbReference type="HAMAP" id="MF_00011">
    <property type="entry name" value="Adenylosucc_synth"/>
    <property type="match status" value="1"/>
</dbReference>
<dbReference type="HAMAP" id="MF_03127">
    <property type="entry name" value="Adenylosucc_synth_vert_acid"/>
    <property type="match status" value="1"/>
</dbReference>
<dbReference type="InterPro" id="IPR018220">
    <property type="entry name" value="Adenylosuccin_syn_GTP-bd"/>
</dbReference>
<dbReference type="InterPro" id="IPR033128">
    <property type="entry name" value="Adenylosuccin_syn_Lys_AS"/>
</dbReference>
<dbReference type="InterPro" id="IPR042109">
    <property type="entry name" value="Adenylosuccinate_synth_dom1"/>
</dbReference>
<dbReference type="InterPro" id="IPR042110">
    <property type="entry name" value="Adenylosuccinate_synth_dom2"/>
</dbReference>
<dbReference type="InterPro" id="IPR042111">
    <property type="entry name" value="Adenylosuccinate_synth_dom3"/>
</dbReference>
<dbReference type="InterPro" id="IPR001114">
    <property type="entry name" value="Adenylosuccinate_synthetase"/>
</dbReference>
<dbReference type="InterPro" id="IPR027529">
    <property type="entry name" value="AdSS_2_vert"/>
</dbReference>
<dbReference type="InterPro" id="IPR027417">
    <property type="entry name" value="P-loop_NTPase"/>
</dbReference>
<dbReference type="NCBIfam" id="NF002223">
    <property type="entry name" value="PRK01117.1"/>
    <property type="match status" value="1"/>
</dbReference>
<dbReference type="NCBIfam" id="TIGR00184">
    <property type="entry name" value="purA"/>
    <property type="match status" value="1"/>
</dbReference>
<dbReference type="PANTHER" id="PTHR11846">
    <property type="entry name" value="ADENYLOSUCCINATE SYNTHETASE"/>
    <property type="match status" value="1"/>
</dbReference>
<dbReference type="PANTHER" id="PTHR11846:SF13">
    <property type="entry name" value="ADENYLOSUCCINATE SYNTHETASE ISOZYME 2"/>
    <property type="match status" value="1"/>
</dbReference>
<dbReference type="Pfam" id="PF00709">
    <property type="entry name" value="Adenylsucc_synt"/>
    <property type="match status" value="1"/>
</dbReference>
<dbReference type="SMART" id="SM00788">
    <property type="entry name" value="Adenylsucc_synt"/>
    <property type="match status" value="1"/>
</dbReference>
<dbReference type="SUPFAM" id="SSF52540">
    <property type="entry name" value="P-loop containing nucleoside triphosphate hydrolases"/>
    <property type="match status" value="1"/>
</dbReference>
<dbReference type="PROSITE" id="PS01266">
    <property type="entry name" value="ADENYLOSUCCIN_SYN_1"/>
    <property type="match status" value="1"/>
</dbReference>
<dbReference type="PROSITE" id="PS00513">
    <property type="entry name" value="ADENYLOSUCCIN_SYN_2"/>
    <property type="match status" value="1"/>
</dbReference>
<comment type="function">
    <text evidence="2">Plays an important role in the de novo pathway and in the salvage pathway of purine nucleotide biosynthesis. Catalyzes the first committed step in the biosynthesis of AMP from IMP.</text>
</comment>
<comment type="catalytic activity">
    <reaction evidence="3">
        <text>IMP + L-aspartate + GTP = N(6)-(1,2-dicarboxyethyl)-AMP + GDP + phosphate + 2 H(+)</text>
        <dbReference type="Rhea" id="RHEA:15753"/>
        <dbReference type="ChEBI" id="CHEBI:15378"/>
        <dbReference type="ChEBI" id="CHEBI:29991"/>
        <dbReference type="ChEBI" id="CHEBI:37565"/>
        <dbReference type="ChEBI" id="CHEBI:43474"/>
        <dbReference type="ChEBI" id="CHEBI:57567"/>
        <dbReference type="ChEBI" id="CHEBI:58053"/>
        <dbReference type="ChEBI" id="CHEBI:58189"/>
        <dbReference type="EC" id="6.3.4.4"/>
    </reaction>
</comment>
<comment type="cofactor">
    <cofactor evidence="3">
        <name>Mg(2+)</name>
        <dbReference type="ChEBI" id="CHEBI:18420"/>
    </cofactor>
    <text evidence="3">Binds 1 Mg(2+) ion per subunit.</text>
</comment>
<comment type="activity regulation">
    <text evidence="2">Inhibited competitively by AMP and IMP and non-competitively by fructose 1,6-bisphosphate.</text>
</comment>
<comment type="pathway">
    <text evidence="3">Purine metabolism; AMP biosynthesis via de novo pathway; AMP from IMP: step 1/2.</text>
</comment>
<comment type="subunit">
    <text evidence="3">Homodimer.</text>
</comment>
<comment type="subcellular location">
    <subcellularLocation>
        <location evidence="3">Cytoplasm</location>
    </subcellularLocation>
    <subcellularLocation>
        <location evidence="1">Mitochondrion</location>
    </subcellularLocation>
</comment>
<comment type="similarity">
    <text evidence="3">Belongs to the adenylosuccinate synthetase family.</text>
</comment>
<protein>
    <recommendedName>
        <fullName evidence="3">Adenylosuccinate synthetase isozyme 2 A</fullName>
        <shortName>AMPSase 2</shortName>
        <shortName evidence="3">AMPSase 2 A</shortName>
        <shortName evidence="3">AdSS 2 A</shortName>
        <ecNumber evidence="3">6.3.4.4</ecNumber>
    </recommendedName>
    <alternativeName>
        <fullName evidence="3">Adenylosuccinate synthetase, acidic isozyme A</fullName>
    </alternativeName>
    <alternativeName>
        <fullName evidence="3">Adenylosuccinate synthetase, liver isozyme A</fullName>
        <shortName evidence="3">L-type adenylosuccinate synthetase A</shortName>
    </alternativeName>
    <alternativeName>
        <fullName evidence="3">IMP--aspartate ligase 2 A</fullName>
    </alternativeName>
</protein>
<keyword id="KW-0963">Cytoplasm</keyword>
<keyword id="KW-0342">GTP-binding</keyword>
<keyword id="KW-0436">Ligase</keyword>
<keyword id="KW-0460">Magnesium</keyword>
<keyword id="KW-0479">Metal-binding</keyword>
<keyword id="KW-0496">Mitochondrion</keyword>
<keyword id="KW-0547">Nucleotide-binding</keyword>
<keyword id="KW-0658">Purine biosynthesis</keyword>
<keyword id="KW-1185">Reference proteome</keyword>
<feature type="chain" id="PRO_0000398883" description="Adenylosuccinate synthetase isozyme 2 A">
    <location>
        <begin position="1"/>
        <end position="457"/>
    </location>
</feature>
<feature type="active site" description="Proton acceptor" evidence="3">
    <location>
        <position position="41"/>
    </location>
</feature>
<feature type="active site" description="Proton donor" evidence="3">
    <location>
        <position position="69"/>
    </location>
</feature>
<feature type="binding site" evidence="3">
    <location>
        <begin position="40"/>
        <end position="46"/>
    </location>
    <ligand>
        <name>GTP</name>
        <dbReference type="ChEBI" id="CHEBI:37565"/>
    </ligand>
</feature>
<feature type="binding site" description="in other chain" evidence="3">
    <location>
        <begin position="41"/>
        <end position="44"/>
    </location>
    <ligand>
        <name>IMP</name>
        <dbReference type="ChEBI" id="CHEBI:58053"/>
        <note>ligand shared between dimeric partners</note>
    </ligand>
</feature>
<feature type="binding site" evidence="3">
    <location>
        <position position="41"/>
    </location>
    <ligand>
        <name>Mg(2+)</name>
        <dbReference type="ChEBI" id="CHEBI:18420"/>
    </ligand>
</feature>
<feature type="binding site" evidence="3">
    <location>
        <position position="41"/>
    </location>
    <ligand>
        <name>substrate</name>
    </ligand>
</feature>
<feature type="binding site" description="in other chain" evidence="3">
    <location>
        <begin position="66"/>
        <end position="69"/>
    </location>
    <ligand>
        <name>IMP</name>
        <dbReference type="ChEBI" id="CHEBI:58053"/>
        <note>ligand shared between dimeric partners</note>
    </ligand>
</feature>
<feature type="binding site" evidence="3">
    <location>
        <begin position="68"/>
        <end position="70"/>
    </location>
    <ligand>
        <name>GTP</name>
        <dbReference type="ChEBI" id="CHEBI:37565"/>
    </ligand>
</feature>
<feature type="binding site" evidence="3">
    <location>
        <position position="68"/>
    </location>
    <ligand>
        <name>Mg(2+)</name>
        <dbReference type="ChEBI" id="CHEBI:18420"/>
    </ligand>
</feature>
<feature type="binding site" description="in other chain" evidence="3">
    <location>
        <position position="163"/>
    </location>
    <ligand>
        <name>IMP</name>
        <dbReference type="ChEBI" id="CHEBI:58053"/>
        <note>ligand shared between dimeric partners</note>
    </ligand>
</feature>
<feature type="binding site" evidence="3">
    <location>
        <position position="177"/>
    </location>
    <ligand>
        <name>IMP</name>
        <dbReference type="ChEBI" id="CHEBI:58053"/>
        <note>ligand shared between dimeric partners</note>
    </ligand>
</feature>
<feature type="binding site" description="in other chain" evidence="3">
    <location>
        <position position="256"/>
    </location>
    <ligand>
        <name>IMP</name>
        <dbReference type="ChEBI" id="CHEBI:58053"/>
        <note>ligand shared between dimeric partners</note>
    </ligand>
</feature>
<feature type="binding site" description="in other chain" evidence="3">
    <location>
        <position position="271"/>
    </location>
    <ligand>
        <name>IMP</name>
        <dbReference type="ChEBI" id="CHEBI:58053"/>
        <note>ligand shared between dimeric partners</note>
    </ligand>
</feature>
<feature type="binding site" evidence="3">
    <location>
        <begin position="331"/>
        <end position="337"/>
    </location>
    <ligand>
        <name>substrate</name>
    </ligand>
</feature>
<feature type="binding site" description="in other chain" evidence="3">
    <location>
        <position position="335"/>
    </location>
    <ligand>
        <name>IMP</name>
        <dbReference type="ChEBI" id="CHEBI:58053"/>
        <note>ligand shared between dimeric partners</note>
    </ligand>
</feature>
<feature type="binding site" evidence="3">
    <location>
        <position position="337"/>
    </location>
    <ligand>
        <name>GTP</name>
        <dbReference type="ChEBI" id="CHEBI:37565"/>
    </ligand>
</feature>
<feature type="binding site" evidence="3">
    <location>
        <begin position="363"/>
        <end position="365"/>
    </location>
    <ligand>
        <name>GTP</name>
        <dbReference type="ChEBI" id="CHEBI:37565"/>
    </ligand>
</feature>
<feature type="binding site" evidence="3">
    <location>
        <begin position="445"/>
        <end position="448"/>
    </location>
    <ligand>
        <name>GTP</name>
        <dbReference type="ChEBI" id="CHEBI:37565"/>
    </ligand>
</feature>
<sequence length="457" mass="50016">MSAENGSPGLPNGGVCCATDSGRCSLVGNKVTVVLGAQWGDEGKGKVVDLLAQDADIVCRCQGGNNAGHTVVVDSVEYDFHLLPSGIINQNAIAFIGNGVVIHLPGLFEEAEKNLKKGQGLVGWEKRLCISDRAHIVFDFHQAADGIQEQQRQEQAGKNLGTTKKGIGPVYSSKAARSGLRMCDLVSDFSEFSQRFKLLAKQYKSMYPSLEIDIDGELKKLQDYADRVKPMVKDGVYYLYEALHGPPKNILVEGANAALLDIDFGTYPFVTSSNCTVGGVCTGLGIPPQSVGDVYGVVKAYTTRVGIGAFPTEQNNDTGEMLQTRGHEYGVTTGRKRRCGWLDLVLLRYAHMINGFTALALTKLDILDVLSEIKVGVSYKIDGKKIPHFPANQEVLNRVEVEYETLPGWNTDTCNVRTFEELPENAKKYVRYIELELGIPIKWIGVGKSRESMIQLF</sequence>
<gene>
    <name type="primary">adss2-a</name>
    <name type="synonym">adss-a</name>
</gene>
<name>PUA2A_XENTR</name>
<proteinExistence type="evidence at transcript level"/>
<organism>
    <name type="scientific">Xenopus tropicalis</name>
    <name type="common">Western clawed frog</name>
    <name type="synonym">Silurana tropicalis</name>
    <dbReference type="NCBI Taxonomy" id="8364"/>
    <lineage>
        <taxon>Eukaryota</taxon>
        <taxon>Metazoa</taxon>
        <taxon>Chordata</taxon>
        <taxon>Craniata</taxon>
        <taxon>Vertebrata</taxon>
        <taxon>Euteleostomi</taxon>
        <taxon>Amphibia</taxon>
        <taxon>Batrachia</taxon>
        <taxon>Anura</taxon>
        <taxon>Pipoidea</taxon>
        <taxon>Pipidae</taxon>
        <taxon>Xenopodinae</taxon>
        <taxon>Xenopus</taxon>
        <taxon>Silurana</taxon>
    </lineage>
</organism>